<gene>
    <name evidence="1" type="primary">murE</name>
    <name type="ordered locus">SERP0607</name>
</gene>
<dbReference type="EC" id="6.3.2.7" evidence="1"/>
<dbReference type="EMBL" id="CP000029">
    <property type="protein sequence ID" value="AAW54033.1"/>
    <property type="molecule type" value="Genomic_DNA"/>
</dbReference>
<dbReference type="RefSeq" id="WP_001829323.1">
    <property type="nucleotide sequence ID" value="NC_002976.3"/>
</dbReference>
<dbReference type="SMR" id="Q5HQE6"/>
<dbReference type="STRING" id="176279.SERP0607"/>
<dbReference type="KEGG" id="ser:SERP0607"/>
<dbReference type="eggNOG" id="COG0769">
    <property type="taxonomic scope" value="Bacteria"/>
</dbReference>
<dbReference type="HOGENOM" id="CLU_022291_0_1_9"/>
<dbReference type="UniPathway" id="UPA00219"/>
<dbReference type="Proteomes" id="UP000000531">
    <property type="component" value="Chromosome"/>
</dbReference>
<dbReference type="GO" id="GO:0005737">
    <property type="term" value="C:cytoplasm"/>
    <property type="evidence" value="ECO:0007669"/>
    <property type="project" value="UniProtKB-SubCell"/>
</dbReference>
<dbReference type="GO" id="GO:0005524">
    <property type="term" value="F:ATP binding"/>
    <property type="evidence" value="ECO:0007669"/>
    <property type="project" value="UniProtKB-UniRule"/>
</dbReference>
<dbReference type="GO" id="GO:0000287">
    <property type="term" value="F:magnesium ion binding"/>
    <property type="evidence" value="ECO:0007669"/>
    <property type="project" value="UniProtKB-UniRule"/>
</dbReference>
<dbReference type="GO" id="GO:0047482">
    <property type="term" value="F:UDP-N-acetylmuramoyl-L-alanyl-D-glutamate-L-lysine ligase activity"/>
    <property type="evidence" value="ECO:0007669"/>
    <property type="project" value="UniProtKB-UniRule"/>
</dbReference>
<dbReference type="GO" id="GO:0051301">
    <property type="term" value="P:cell division"/>
    <property type="evidence" value="ECO:0007669"/>
    <property type="project" value="UniProtKB-KW"/>
</dbReference>
<dbReference type="GO" id="GO:0071555">
    <property type="term" value="P:cell wall organization"/>
    <property type="evidence" value="ECO:0007669"/>
    <property type="project" value="UniProtKB-KW"/>
</dbReference>
<dbReference type="GO" id="GO:0009252">
    <property type="term" value="P:peptidoglycan biosynthetic process"/>
    <property type="evidence" value="ECO:0007669"/>
    <property type="project" value="UniProtKB-UniRule"/>
</dbReference>
<dbReference type="GO" id="GO:0008360">
    <property type="term" value="P:regulation of cell shape"/>
    <property type="evidence" value="ECO:0007669"/>
    <property type="project" value="UniProtKB-KW"/>
</dbReference>
<dbReference type="Gene3D" id="3.90.190.20">
    <property type="entry name" value="Mur ligase, C-terminal domain"/>
    <property type="match status" value="1"/>
</dbReference>
<dbReference type="Gene3D" id="3.40.1190.10">
    <property type="entry name" value="Mur-like, catalytic domain"/>
    <property type="match status" value="1"/>
</dbReference>
<dbReference type="Gene3D" id="3.40.1390.10">
    <property type="entry name" value="MurE/MurF, N-terminal domain"/>
    <property type="match status" value="1"/>
</dbReference>
<dbReference type="HAMAP" id="MF_00208">
    <property type="entry name" value="MurE"/>
    <property type="match status" value="1"/>
</dbReference>
<dbReference type="InterPro" id="IPR036565">
    <property type="entry name" value="Mur-like_cat_sf"/>
</dbReference>
<dbReference type="InterPro" id="IPR004101">
    <property type="entry name" value="Mur_ligase_C"/>
</dbReference>
<dbReference type="InterPro" id="IPR036615">
    <property type="entry name" value="Mur_ligase_C_dom_sf"/>
</dbReference>
<dbReference type="InterPro" id="IPR013221">
    <property type="entry name" value="Mur_ligase_cen"/>
</dbReference>
<dbReference type="InterPro" id="IPR000713">
    <property type="entry name" value="Mur_ligase_N"/>
</dbReference>
<dbReference type="InterPro" id="IPR035911">
    <property type="entry name" value="MurE/MurF_N"/>
</dbReference>
<dbReference type="InterPro" id="IPR005761">
    <property type="entry name" value="UDP-N-AcMur-Glu-dNH2Pim_ligase"/>
</dbReference>
<dbReference type="NCBIfam" id="TIGR01085">
    <property type="entry name" value="murE"/>
    <property type="match status" value="1"/>
</dbReference>
<dbReference type="NCBIfam" id="NF001126">
    <property type="entry name" value="PRK00139.1-4"/>
    <property type="match status" value="1"/>
</dbReference>
<dbReference type="NCBIfam" id="NF010628">
    <property type="entry name" value="PRK14022.1"/>
    <property type="match status" value="1"/>
</dbReference>
<dbReference type="PANTHER" id="PTHR23135">
    <property type="entry name" value="MUR LIGASE FAMILY MEMBER"/>
    <property type="match status" value="1"/>
</dbReference>
<dbReference type="PANTHER" id="PTHR23135:SF4">
    <property type="entry name" value="UDP-N-ACETYLMURAMOYL-L-ALANYL-D-GLUTAMATE--2,6-DIAMINOPIMELATE LIGASE MURE HOMOLOG, CHLOROPLASTIC"/>
    <property type="match status" value="1"/>
</dbReference>
<dbReference type="Pfam" id="PF01225">
    <property type="entry name" value="Mur_ligase"/>
    <property type="match status" value="1"/>
</dbReference>
<dbReference type="Pfam" id="PF02875">
    <property type="entry name" value="Mur_ligase_C"/>
    <property type="match status" value="1"/>
</dbReference>
<dbReference type="Pfam" id="PF08245">
    <property type="entry name" value="Mur_ligase_M"/>
    <property type="match status" value="1"/>
</dbReference>
<dbReference type="SUPFAM" id="SSF53623">
    <property type="entry name" value="MurD-like peptide ligases, catalytic domain"/>
    <property type="match status" value="1"/>
</dbReference>
<dbReference type="SUPFAM" id="SSF53244">
    <property type="entry name" value="MurD-like peptide ligases, peptide-binding domain"/>
    <property type="match status" value="1"/>
</dbReference>
<dbReference type="SUPFAM" id="SSF63418">
    <property type="entry name" value="MurE/MurF N-terminal domain"/>
    <property type="match status" value="1"/>
</dbReference>
<proteinExistence type="inferred from homology"/>
<sequence length="494" mass="54277">MNASALFKKIRVKNVIGTLDIQVDDITTDSRTAKEGSLFVASKGYTVDSHKFCQNVVDQGCGIVVVNRELELKGNVTQVVVPDTLRVASLLAHELYEFPSHQLTTYGVTGTNGKTSIATMIHLIYRKLNKNSAYLGTNGFQVNETKTKGANTTPETVALTKKIKEAVDANAEAMTMEVSSHGLALGRLRGVEFDVAIFSNLTQDHLDFHGTMEAYGHAKSLLFSQLGEDLSKEKYVVLNNDDDFSDYLASVTPYEVFTYGITHEAQFMAKNIKESLQGVEFEFCTPFGSFPVKSPYVGRFNISNIMAAMIAVWSKGTNLNEIINAVTELEPVEGRLEVLDPSLPIDLIIDYAHTADGMNKLIDAVQPFVKQKLIFLVGMAGERDLTKTPEMGRVACRADYVIFTPDNPANDDPKMLTAELAKGATHNNYIEFDDRAEGIRHAIDIAEPGDTVVLASKGREPYQIMPGHVKVPHRDDLIGLKAAYQKFGGGPLED</sequence>
<protein>
    <recommendedName>
        <fullName evidence="1">UDP-N-acetylmuramoyl-L-alanyl-D-glutamate--L-lysine ligase</fullName>
        <ecNumber evidence="1">6.3.2.7</ecNumber>
    </recommendedName>
    <alternativeName>
        <fullName evidence="1">L-lysine-adding enzyme</fullName>
    </alternativeName>
    <alternativeName>
        <fullName evidence="1">UDP-MurNAc-L-Ala-D-Glu:L-Lys ligase</fullName>
    </alternativeName>
    <alternativeName>
        <fullName evidence="1">UDP-MurNAc-tripeptide synthetase</fullName>
    </alternativeName>
    <alternativeName>
        <fullName evidence="1">UDP-N-acetylmuramyl-tripeptide synthetase</fullName>
    </alternativeName>
</protein>
<reference key="1">
    <citation type="journal article" date="2005" name="J. Bacteriol.">
        <title>Insights on evolution of virulence and resistance from the complete genome analysis of an early methicillin-resistant Staphylococcus aureus strain and a biofilm-producing methicillin-resistant Staphylococcus epidermidis strain.</title>
        <authorList>
            <person name="Gill S.R."/>
            <person name="Fouts D.E."/>
            <person name="Archer G.L."/>
            <person name="Mongodin E.F."/>
            <person name="DeBoy R.T."/>
            <person name="Ravel J."/>
            <person name="Paulsen I.T."/>
            <person name="Kolonay J.F."/>
            <person name="Brinkac L.M."/>
            <person name="Beanan M.J."/>
            <person name="Dodson R.J."/>
            <person name="Daugherty S.C."/>
            <person name="Madupu R."/>
            <person name="Angiuoli S.V."/>
            <person name="Durkin A.S."/>
            <person name="Haft D.H."/>
            <person name="Vamathevan J.J."/>
            <person name="Khouri H."/>
            <person name="Utterback T.R."/>
            <person name="Lee C."/>
            <person name="Dimitrov G."/>
            <person name="Jiang L."/>
            <person name="Qin H."/>
            <person name="Weidman J."/>
            <person name="Tran K."/>
            <person name="Kang K.H."/>
            <person name="Hance I.R."/>
            <person name="Nelson K.E."/>
            <person name="Fraser C.M."/>
        </authorList>
    </citation>
    <scope>NUCLEOTIDE SEQUENCE [LARGE SCALE GENOMIC DNA]</scope>
    <source>
        <strain>ATCC 35984 / DSM 28319 / BCRC 17069 / CCUG 31568 / BM 3577 / RP62A</strain>
    </source>
</reference>
<accession>Q5HQE6</accession>
<feature type="chain" id="PRO_0000101947" description="UDP-N-acetylmuramoyl-L-alanyl-D-glutamate--L-lysine ligase">
    <location>
        <begin position="1"/>
        <end position="494"/>
    </location>
</feature>
<feature type="short sequence motif" description="L-lysine recognition motif">
    <location>
        <begin position="406"/>
        <end position="409"/>
    </location>
</feature>
<feature type="binding site" evidence="1">
    <location>
        <position position="30"/>
    </location>
    <ligand>
        <name>UDP-N-acetyl-alpha-D-muramoyl-L-alanyl-D-glutamate</name>
        <dbReference type="ChEBI" id="CHEBI:83900"/>
    </ligand>
</feature>
<feature type="binding site" evidence="1">
    <location>
        <begin position="110"/>
        <end position="116"/>
    </location>
    <ligand>
        <name>ATP</name>
        <dbReference type="ChEBI" id="CHEBI:30616"/>
    </ligand>
</feature>
<feature type="binding site" evidence="1">
    <location>
        <begin position="152"/>
        <end position="153"/>
    </location>
    <ligand>
        <name>UDP-N-acetyl-alpha-D-muramoyl-L-alanyl-D-glutamate</name>
        <dbReference type="ChEBI" id="CHEBI:83900"/>
    </ligand>
</feature>
<feature type="binding site" evidence="1">
    <location>
        <position position="179"/>
    </location>
    <ligand>
        <name>UDP-N-acetyl-alpha-D-muramoyl-L-alanyl-D-glutamate</name>
        <dbReference type="ChEBI" id="CHEBI:83900"/>
    </ligand>
</feature>
<feature type="binding site" evidence="1">
    <location>
        <position position="187"/>
    </location>
    <ligand>
        <name>UDP-N-acetyl-alpha-D-muramoyl-L-alanyl-D-glutamate</name>
        <dbReference type="ChEBI" id="CHEBI:83900"/>
    </ligand>
</feature>
<feature type="modified residue" description="N6-carboxylysine" evidence="1">
    <location>
        <position position="219"/>
    </location>
</feature>
<organism>
    <name type="scientific">Staphylococcus epidermidis (strain ATCC 35984 / DSM 28319 / BCRC 17069 / CCUG 31568 / BM 3577 / RP62A)</name>
    <dbReference type="NCBI Taxonomy" id="176279"/>
    <lineage>
        <taxon>Bacteria</taxon>
        <taxon>Bacillati</taxon>
        <taxon>Bacillota</taxon>
        <taxon>Bacilli</taxon>
        <taxon>Bacillales</taxon>
        <taxon>Staphylococcaceae</taxon>
        <taxon>Staphylococcus</taxon>
    </lineage>
</organism>
<evidence type="ECO:0000255" key="1">
    <source>
        <dbReference type="HAMAP-Rule" id="MF_00208"/>
    </source>
</evidence>
<comment type="function">
    <text evidence="1">Catalyzes the addition of L-lysine to the nucleotide precursor UDP-N-acetylmuramoyl-L-alanyl-D-glutamate (UMAG) in the biosynthesis of bacterial cell-wall peptidoglycan.</text>
</comment>
<comment type="catalytic activity">
    <reaction evidence="1">
        <text>UDP-N-acetyl-alpha-D-muramoyl-L-alanyl-D-glutamate + L-lysine + ATP = UDP-N-acetyl-alpha-D-muramoyl-L-alanyl-gamma-D-glutamyl-L-lysine + ADP + phosphate + H(+)</text>
        <dbReference type="Rhea" id="RHEA:17969"/>
        <dbReference type="ChEBI" id="CHEBI:15378"/>
        <dbReference type="ChEBI" id="CHEBI:30616"/>
        <dbReference type="ChEBI" id="CHEBI:32551"/>
        <dbReference type="ChEBI" id="CHEBI:43474"/>
        <dbReference type="ChEBI" id="CHEBI:83900"/>
        <dbReference type="ChEBI" id="CHEBI:83903"/>
        <dbReference type="ChEBI" id="CHEBI:456216"/>
        <dbReference type="EC" id="6.3.2.7"/>
    </reaction>
</comment>
<comment type="pathway">
    <text evidence="1">Cell wall biogenesis; peptidoglycan biosynthesis.</text>
</comment>
<comment type="subcellular location">
    <subcellularLocation>
        <location evidence="1">Cytoplasm</location>
    </subcellularLocation>
</comment>
<comment type="PTM">
    <text evidence="1">Carboxylation is probably crucial for Mg(2+) binding and, consequently, for the gamma-phosphate positioning of ATP.</text>
</comment>
<comment type="similarity">
    <text evidence="1">Belongs to the MurCDEF family. MurE subfamily.</text>
</comment>
<keyword id="KW-0067">ATP-binding</keyword>
<keyword id="KW-0131">Cell cycle</keyword>
<keyword id="KW-0132">Cell division</keyword>
<keyword id="KW-0133">Cell shape</keyword>
<keyword id="KW-0961">Cell wall biogenesis/degradation</keyword>
<keyword id="KW-0963">Cytoplasm</keyword>
<keyword id="KW-0436">Ligase</keyword>
<keyword id="KW-0547">Nucleotide-binding</keyword>
<keyword id="KW-0573">Peptidoglycan synthesis</keyword>
<keyword id="KW-1185">Reference proteome</keyword>
<name>MURE_STAEQ</name>